<keyword id="KW-1185">Reference proteome</keyword>
<comment type="similarity">
    <text evidence="1">Belongs to the UPF0304 family.</text>
</comment>
<sequence>MEMTTTQRLILANQYKLMGLLDPANAKTYARSEAIVRGGFSLELKALDNEFNNLSVEECQTVLDTLEMYKALQVSYNNLTDKAEVTEHRLKFAGYCAVREKKYLNYLRFITGTEGKYQEFMHCEHGCDSQTPMWDKYTKMLDVWRNCPHGYHLSIQEIQKILNA</sequence>
<proteinExistence type="inferred from homology"/>
<feature type="chain" id="PRO_1000072830" description="UPF0304 protein Asuc_0543">
    <location>
        <begin position="1"/>
        <end position="164"/>
    </location>
</feature>
<accession>A6VLS1</accession>
<protein>
    <recommendedName>
        <fullName evidence="1">UPF0304 protein Asuc_0543</fullName>
    </recommendedName>
</protein>
<reference key="1">
    <citation type="journal article" date="2010" name="BMC Genomics">
        <title>A genomic perspective on the potential of Actinobacillus succinogenes for industrial succinate production.</title>
        <authorList>
            <person name="McKinlay J.B."/>
            <person name="Laivenieks M."/>
            <person name="Schindler B.D."/>
            <person name="McKinlay A.A."/>
            <person name="Siddaramappa S."/>
            <person name="Challacombe J.F."/>
            <person name="Lowry S.R."/>
            <person name="Clum A."/>
            <person name="Lapidus A.L."/>
            <person name="Burkhart K.B."/>
            <person name="Harkins V."/>
            <person name="Vieille C."/>
        </authorList>
    </citation>
    <scope>NUCLEOTIDE SEQUENCE [LARGE SCALE GENOMIC DNA]</scope>
    <source>
        <strain>ATCC 55618 / DSM 22257 / CCUG 43843 / 130Z</strain>
    </source>
</reference>
<organism>
    <name type="scientific">Actinobacillus succinogenes (strain ATCC 55618 / DSM 22257 / CCUG 43843 / 130Z)</name>
    <dbReference type="NCBI Taxonomy" id="339671"/>
    <lineage>
        <taxon>Bacteria</taxon>
        <taxon>Pseudomonadati</taxon>
        <taxon>Pseudomonadota</taxon>
        <taxon>Gammaproteobacteria</taxon>
        <taxon>Pasteurellales</taxon>
        <taxon>Pasteurellaceae</taxon>
        <taxon>Actinobacillus</taxon>
    </lineage>
</organism>
<dbReference type="EMBL" id="CP000746">
    <property type="protein sequence ID" value="ABR73918.1"/>
    <property type="molecule type" value="Genomic_DNA"/>
</dbReference>
<dbReference type="RefSeq" id="WP_012072298.1">
    <property type="nucleotide sequence ID" value="NC_009655.1"/>
</dbReference>
<dbReference type="SMR" id="A6VLS1"/>
<dbReference type="STRING" id="339671.Asuc_0543"/>
<dbReference type="KEGG" id="asu:Asuc_0543"/>
<dbReference type="eggNOG" id="COG3013">
    <property type="taxonomic scope" value="Bacteria"/>
</dbReference>
<dbReference type="HOGENOM" id="CLU_101021_1_0_6"/>
<dbReference type="OrthoDB" id="5589463at2"/>
<dbReference type="Proteomes" id="UP000001114">
    <property type="component" value="Chromosome"/>
</dbReference>
<dbReference type="Gene3D" id="1.10.287.680">
    <property type="entry name" value="Helix hairpin bin"/>
    <property type="match status" value="1"/>
</dbReference>
<dbReference type="Gene3D" id="1.10.3190.10">
    <property type="entry name" value="yfbu gene product, domain 2"/>
    <property type="match status" value="1"/>
</dbReference>
<dbReference type="HAMAP" id="MF_00762">
    <property type="entry name" value="UPF0304"/>
    <property type="match status" value="1"/>
</dbReference>
<dbReference type="InterPro" id="IPR005587">
    <property type="entry name" value="UPF0304_YfbU"/>
</dbReference>
<dbReference type="InterPro" id="IPR023146">
    <property type="entry name" value="YfbU_alpha-helical_sf"/>
</dbReference>
<dbReference type="InterPro" id="IPR023145">
    <property type="entry name" value="YfbU_helix-hairpin_sf"/>
</dbReference>
<dbReference type="NCBIfam" id="NF003936">
    <property type="entry name" value="PRK05445.1"/>
    <property type="match status" value="1"/>
</dbReference>
<dbReference type="Pfam" id="PF03887">
    <property type="entry name" value="YfbU"/>
    <property type="match status" value="1"/>
</dbReference>
<dbReference type="PIRSF" id="PIRSF006272">
    <property type="entry name" value="UCP006272"/>
    <property type="match status" value="1"/>
</dbReference>
<dbReference type="SUPFAM" id="SSF116960">
    <property type="entry name" value="YfbU-like"/>
    <property type="match status" value="1"/>
</dbReference>
<name>Y543_ACTSZ</name>
<evidence type="ECO:0000255" key="1">
    <source>
        <dbReference type="HAMAP-Rule" id="MF_00762"/>
    </source>
</evidence>
<gene>
    <name type="ordered locus">Asuc_0543</name>
</gene>